<gene>
    <name evidence="1" type="primary">arnB</name>
    <name type="ordered locus">PFL_3043</name>
</gene>
<keyword id="KW-0032">Aminotransferase</keyword>
<keyword id="KW-0046">Antibiotic resistance</keyword>
<keyword id="KW-0441">Lipid A biosynthesis</keyword>
<keyword id="KW-0444">Lipid biosynthesis</keyword>
<keyword id="KW-0443">Lipid metabolism</keyword>
<keyword id="KW-0448">Lipopolysaccharide biosynthesis</keyword>
<keyword id="KW-0663">Pyridoxal phosphate</keyword>
<keyword id="KW-0808">Transferase</keyword>
<accession>Q4KC84</accession>
<organism>
    <name type="scientific">Pseudomonas fluorescens (strain ATCC BAA-477 / NRRL B-23932 / Pf-5)</name>
    <dbReference type="NCBI Taxonomy" id="220664"/>
    <lineage>
        <taxon>Bacteria</taxon>
        <taxon>Pseudomonadati</taxon>
        <taxon>Pseudomonadota</taxon>
        <taxon>Gammaproteobacteria</taxon>
        <taxon>Pseudomonadales</taxon>
        <taxon>Pseudomonadaceae</taxon>
        <taxon>Pseudomonas</taxon>
    </lineage>
</organism>
<reference key="1">
    <citation type="journal article" date="2005" name="Nat. Biotechnol.">
        <title>Complete genome sequence of the plant commensal Pseudomonas fluorescens Pf-5.</title>
        <authorList>
            <person name="Paulsen I.T."/>
            <person name="Press C.M."/>
            <person name="Ravel J."/>
            <person name="Kobayashi D.Y."/>
            <person name="Myers G.S.A."/>
            <person name="Mavrodi D.V."/>
            <person name="DeBoy R.T."/>
            <person name="Seshadri R."/>
            <person name="Ren Q."/>
            <person name="Madupu R."/>
            <person name="Dodson R.J."/>
            <person name="Durkin A.S."/>
            <person name="Brinkac L.M."/>
            <person name="Daugherty S.C."/>
            <person name="Sullivan S.A."/>
            <person name="Rosovitz M.J."/>
            <person name="Gwinn M.L."/>
            <person name="Zhou L."/>
            <person name="Schneider D.J."/>
            <person name="Cartinhour S.W."/>
            <person name="Nelson W.C."/>
            <person name="Weidman J."/>
            <person name="Watkins K."/>
            <person name="Tran K."/>
            <person name="Khouri H."/>
            <person name="Pierson E.A."/>
            <person name="Pierson L.S. III"/>
            <person name="Thomashow L.S."/>
            <person name="Loper J.E."/>
        </authorList>
    </citation>
    <scope>NUCLEOTIDE SEQUENCE [LARGE SCALE GENOMIC DNA]</scope>
    <source>
        <strain>ATCC BAA-477 / NRRL B-23932 / Pf-5</strain>
    </source>
</reference>
<name>ARNB_PSEF5</name>
<dbReference type="EC" id="2.6.1.87" evidence="1"/>
<dbReference type="EMBL" id="CP000076">
    <property type="protein sequence ID" value="AAY92313.2"/>
    <property type="molecule type" value="Genomic_DNA"/>
</dbReference>
<dbReference type="RefSeq" id="WP_011061331.1">
    <property type="nucleotide sequence ID" value="NC_004129.6"/>
</dbReference>
<dbReference type="SMR" id="Q4KC84"/>
<dbReference type="STRING" id="220664.PFL_3043"/>
<dbReference type="KEGG" id="pfl:PFL_3043"/>
<dbReference type="PATRIC" id="fig|220664.5.peg.3103"/>
<dbReference type="eggNOG" id="COG0399">
    <property type="taxonomic scope" value="Bacteria"/>
</dbReference>
<dbReference type="HOGENOM" id="CLU_033332_0_3_6"/>
<dbReference type="UniPathway" id="UPA00030"/>
<dbReference type="UniPathway" id="UPA00032">
    <property type="reaction ID" value="UER00493"/>
</dbReference>
<dbReference type="Proteomes" id="UP000008540">
    <property type="component" value="Chromosome"/>
</dbReference>
<dbReference type="GO" id="GO:0016020">
    <property type="term" value="C:membrane"/>
    <property type="evidence" value="ECO:0007669"/>
    <property type="project" value="GOC"/>
</dbReference>
<dbReference type="GO" id="GO:0030170">
    <property type="term" value="F:pyridoxal phosphate binding"/>
    <property type="evidence" value="ECO:0007669"/>
    <property type="project" value="TreeGrafter"/>
</dbReference>
<dbReference type="GO" id="GO:0099620">
    <property type="term" value="F:UDP-4-amino-4-deoxy-L-arabinose aminotransferase"/>
    <property type="evidence" value="ECO:0007669"/>
    <property type="project" value="UniProtKB-EC"/>
</dbReference>
<dbReference type="GO" id="GO:0009245">
    <property type="term" value="P:lipid A biosynthetic process"/>
    <property type="evidence" value="ECO:0007669"/>
    <property type="project" value="UniProtKB-KW"/>
</dbReference>
<dbReference type="GO" id="GO:0009103">
    <property type="term" value="P:lipopolysaccharide biosynthetic process"/>
    <property type="evidence" value="ECO:0007669"/>
    <property type="project" value="UniProtKB-UniRule"/>
</dbReference>
<dbReference type="GO" id="GO:0046677">
    <property type="term" value="P:response to antibiotic"/>
    <property type="evidence" value="ECO:0007669"/>
    <property type="project" value="UniProtKB-KW"/>
</dbReference>
<dbReference type="CDD" id="cd00616">
    <property type="entry name" value="AHBA_syn"/>
    <property type="match status" value="1"/>
</dbReference>
<dbReference type="FunFam" id="3.40.640.10:FF:000040">
    <property type="entry name" value="UDP-4-amino-4-deoxy-L-arabinose--oxoglutarate aminotransferase"/>
    <property type="match status" value="1"/>
</dbReference>
<dbReference type="FunFam" id="3.90.1150.10:FF:000030">
    <property type="entry name" value="UDP-4-amino-4-deoxy-L-arabinose--oxoglutarate aminotransferase"/>
    <property type="match status" value="1"/>
</dbReference>
<dbReference type="Gene3D" id="3.90.1150.10">
    <property type="entry name" value="Aspartate Aminotransferase, domain 1"/>
    <property type="match status" value="1"/>
</dbReference>
<dbReference type="Gene3D" id="3.40.640.10">
    <property type="entry name" value="Type I PLP-dependent aspartate aminotransferase-like (Major domain)"/>
    <property type="match status" value="1"/>
</dbReference>
<dbReference type="HAMAP" id="MF_01167">
    <property type="entry name" value="ArnB_transfer"/>
    <property type="match status" value="1"/>
</dbReference>
<dbReference type="InterPro" id="IPR022850">
    <property type="entry name" value="ArnB_NH2Trfase"/>
</dbReference>
<dbReference type="InterPro" id="IPR000653">
    <property type="entry name" value="DegT/StrS_aminotransferase"/>
</dbReference>
<dbReference type="InterPro" id="IPR015424">
    <property type="entry name" value="PyrdxlP-dep_Trfase"/>
</dbReference>
<dbReference type="InterPro" id="IPR015421">
    <property type="entry name" value="PyrdxlP-dep_Trfase_major"/>
</dbReference>
<dbReference type="InterPro" id="IPR015422">
    <property type="entry name" value="PyrdxlP-dep_Trfase_small"/>
</dbReference>
<dbReference type="NCBIfam" id="NF008658">
    <property type="entry name" value="PRK11658.1"/>
    <property type="match status" value="1"/>
</dbReference>
<dbReference type="PANTHER" id="PTHR30244:SF34">
    <property type="entry name" value="DTDP-4-AMINO-4,6-DIDEOXYGALACTOSE TRANSAMINASE"/>
    <property type="match status" value="1"/>
</dbReference>
<dbReference type="PANTHER" id="PTHR30244">
    <property type="entry name" value="TRANSAMINASE"/>
    <property type="match status" value="1"/>
</dbReference>
<dbReference type="Pfam" id="PF01041">
    <property type="entry name" value="DegT_DnrJ_EryC1"/>
    <property type="match status" value="1"/>
</dbReference>
<dbReference type="PIRSF" id="PIRSF000390">
    <property type="entry name" value="PLP_StrS"/>
    <property type="match status" value="1"/>
</dbReference>
<dbReference type="SUPFAM" id="SSF53383">
    <property type="entry name" value="PLP-dependent transferases"/>
    <property type="match status" value="1"/>
</dbReference>
<proteinExistence type="inferred from homology"/>
<evidence type="ECO:0000255" key="1">
    <source>
        <dbReference type="HAMAP-Rule" id="MF_01167"/>
    </source>
</evidence>
<comment type="function">
    <text evidence="1">Catalyzes the conversion of UDP-4-keto-arabinose (UDP-Ara4O) to UDP-4-amino-4-deoxy-L-arabinose (UDP-L-Ara4N). The modified arabinose is attached to lipid A and is required for resistance to polymyxin and cationic antimicrobial peptides.</text>
</comment>
<comment type="catalytic activity">
    <reaction evidence="1">
        <text>UDP-4-amino-4-deoxy-beta-L-arabinose + 2-oxoglutarate = UDP-beta-L-threo-pentopyranos-4-ulose + L-glutamate</text>
        <dbReference type="Rhea" id="RHEA:24710"/>
        <dbReference type="ChEBI" id="CHEBI:16810"/>
        <dbReference type="ChEBI" id="CHEBI:29985"/>
        <dbReference type="ChEBI" id="CHEBI:58708"/>
        <dbReference type="ChEBI" id="CHEBI:58710"/>
        <dbReference type="EC" id="2.6.1.87"/>
    </reaction>
</comment>
<comment type="cofactor">
    <cofactor evidence="1">
        <name>pyridoxal 5'-phosphate</name>
        <dbReference type="ChEBI" id="CHEBI:597326"/>
    </cofactor>
</comment>
<comment type="pathway">
    <text evidence="1">Nucleotide-sugar biosynthesis; UDP-4-deoxy-4-formamido-beta-L-arabinose biosynthesis; UDP-4-deoxy-4-formamido-beta-L-arabinose from UDP-alpha-D-glucuronate: step 2/3.</text>
</comment>
<comment type="pathway">
    <text evidence="1">Bacterial outer membrane biogenesis; lipopolysaccharide biosynthesis.</text>
</comment>
<comment type="subunit">
    <text evidence="1">Homodimer.</text>
</comment>
<comment type="similarity">
    <text evidence="1">Belongs to the DegT/DnrJ/EryC1 family. ArnB subfamily.</text>
</comment>
<feature type="chain" id="PRO_0000110022" description="UDP-4-amino-4-deoxy-L-arabinose--oxoglutarate aminotransferase">
    <location>
        <begin position="1"/>
        <end position="379"/>
    </location>
</feature>
<feature type="modified residue" description="N6-(pyridoxal phosphate)lysine" evidence="1">
    <location>
        <position position="183"/>
    </location>
</feature>
<sequence length="379" mass="41607">MNQAFLPFSRPSIGEEEIAAVEQVLRSGWITTGPKNQELEQQFAERVGARHAVALSSATGAMHITLLALGIGPGDEVITPSQTWVSTANMICLLGATPVFVDVDPDTLMSDAATIEAAITPRTKAIIPVHYAGAAFDLDPLYALADKHGIAVIEDAAHAAGTTYRGRAIGARGTAIFSFHAIKNMTCAEGAMFVSDDEALANRVRMLKFHGLGVDAYDRLTHGRKPQAQVIEPGFKYNLADMNAAIALVQLQRLDEINAKREVLAKAYLQRLEGLPVQPLLLPQYPQQHAWHLFILRIDAERCGLDREAFMKGLQEQNIGTGIHFIATHLHTYYRQRFPEVQLPHTEWNSARLCSIPLFPDMTLDDVERVTGAIANLLD</sequence>
<protein>
    <recommendedName>
        <fullName evidence="1">UDP-4-amino-4-deoxy-L-arabinose--oxoglutarate aminotransferase</fullName>
        <ecNumber evidence="1">2.6.1.87</ecNumber>
    </recommendedName>
    <alternativeName>
        <fullName evidence="1">UDP-(beta-L-threo-pentapyranosyl-4''-ulose diphosphate) aminotransferase</fullName>
        <shortName evidence="1">UDP-Ara4O aminotransferase</shortName>
    </alternativeName>
    <alternativeName>
        <fullName evidence="1">UDP-4-amino-4-deoxy-L-arabinose aminotransferase</fullName>
    </alternativeName>
</protein>